<dbReference type="EMBL" id="L34605">
    <property type="protein sequence ID" value="AAA33600.1"/>
    <property type="molecule type" value="Genomic_DNA"/>
</dbReference>
<dbReference type="EMBL" id="CM002239">
    <property type="protein sequence ID" value="EAA33125.1"/>
    <property type="molecule type" value="Genomic_DNA"/>
</dbReference>
<dbReference type="EMBL" id="S81767">
    <property type="protein sequence ID" value="AAB21410.1"/>
    <property type="molecule type" value="Genomic_DNA"/>
</dbReference>
<dbReference type="PIR" id="S47892">
    <property type="entry name" value="S47892"/>
</dbReference>
<dbReference type="RefSeq" id="XP_962361.1">
    <property type="nucleotide sequence ID" value="XM_957268.2"/>
</dbReference>
<dbReference type="SMR" id="P38680"/>
<dbReference type="STRING" id="367110.P38680"/>
<dbReference type="TCDB" id="2.A.18.4.1">
    <property type="family name" value="the amino acid/auxin permease (aaap) family"/>
</dbReference>
<dbReference type="PaxDb" id="5141-EFNCRP00000006372"/>
<dbReference type="EnsemblFungi" id="EAA33125">
    <property type="protein sequence ID" value="EAA33125"/>
    <property type="gene ID" value="NCU06619"/>
</dbReference>
<dbReference type="GeneID" id="3878509"/>
<dbReference type="KEGG" id="ncr:NCU06619"/>
<dbReference type="VEuPathDB" id="FungiDB:NCU06619"/>
<dbReference type="HOGENOM" id="CLU_027816_4_0_1"/>
<dbReference type="InParanoid" id="P38680"/>
<dbReference type="OMA" id="DAGRLMF"/>
<dbReference type="OrthoDB" id="655540at2759"/>
<dbReference type="Proteomes" id="UP000001805">
    <property type="component" value="Chromosome 4, Linkage Group IV"/>
</dbReference>
<dbReference type="GO" id="GO:0016020">
    <property type="term" value="C:membrane"/>
    <property type="evidence" value="ECO:0000318"/>
    <property type="project" value="GO_Central"/>
</dbReference>
<dbReference type="GO" id="GO:0015179">
    <property type="term" value="F:L-amino acid transmembrane transporter activity"/>
    <property type="evidence" value="ECO:0000318"/>
    <property type="project" value="GO_Central"/>
</dbReference>
<dbReference type="GO" id="GO:0003333">
    <property type="term" value="P:amino acid transmembrane transport"/>
    <property type="evidence" value="ECO:0000318"/>
    <property type="project" value="GO_Central"/>
</dbReference>
<dbReference type="InterPro" id="IPR013057">
    <property type="entry name" value="AA_transpt_TM"/>
</dbReference>
<dbReference type="PANTHER" id="PTHR22950">
    <property type="entry name" value="AMINO ACID TRANSPORTER"/>
    <property type="match status" value="1"/>
</dbReference>
<dbReference type="PANTHER" id="PTHR22950:SF8">
    <property type="entry name" value="AMINO ACID TRANSPORTER (EUROFUNG)"/>
    <property type="match status" value="1"/>
</dbReference>
<dbReference type="Pfam" id="PF01490">
    <property type="entry name" value="Aa_trans"/>
    <property type="match status" value="1"/>
</dbReference>
<sequence length="470" mass="51162">MDSQYETKKNDPNAIMPYPESNDEHVGEVRGLGGGIMDKEPEAQEGHAKFHRLGWKRLTVVLIVEAIALGSLSLPGAFATLGMVPGVILSVGMGLICIYTAHVIGQTKLKHPEIAHYADVGRVMFGRWGYEIISFMFVLQLIFIVGSHVLTGTIMWGTITDNGNGTCSLVFGIVSAIILFLLAIPPSFAEVAILGYIDFVSICAAILITMIATGIRSSHQEGGLAAVPWSCWPKEDLSLAEGFIAVSNIVFAYSFAMCQFSFMDEMHTPSDYKKSIVALGLIEIFIYTVTGGVVYAFVGPEVQSPALLSAGPLLAKVAFGIALPVIFISGSINTVVVSRYLIERIWPNNVIRYVNTPAGWMVWLGFDFGITLIAWVIAEAIPFFSDLLAICSALFISGFSFYFPALMYFKITRNDAKSQGKKYFLDALNMLCFVIGMGILGIGTYAAIQDIMDRYDHGKVSKPYSCAPLA</sequence>
<reference key="1">
    <citation type="journal article" date="1994" name="Genetics">
        <title>Spontaneous mutation at the mtr locus in neurospora: the molecular spectrum in wild-type and a mutator strain.</title>
        <authorList>
            <person name="Dillon D."/>
            <person name="Stadler D."/>
        </authorList>
    </citation>
    <scope>NUCLEOTIDE SEQUENCE [GENOMIC DNA]</scope>
    <source>
        <strain>Oak Ridge</strain>
    </source>
</reference>
<reference key="2">
    <citation type="journal article" date="2003" name="Nature">
        <title>The genome sequence of the filamentous fungus Neurospora crassa.</title>
        <authorList>
            <person name="Galagan J.E."/>
            <person name="Calvo S.E."/>
            <person name="Borkovich K.A."/>
            <person name="Selker E.U."/>
            <person name="Read N.D."/>
            <person name="Jaffe D.B."/>
            <person name="FitzHugh W."/>
            <person name="Ma L.-J."/>
            <person name="Smirnov S."/>
            <person name="Purcell S."/>
            <person name="Rehman B."/>
            <person name="Elkins T."/>
            <person name="Engels R."/>
            <person name="Wang S."/>
            <person name="Nielsen C.B."/>
            <person name="Butler J."/>
            <person name="Endrizzi M."/>
            <person name="Qui D."/>
            <person name="Ianakiev P."/>
            <person name="Bell-Pedersen D."/>
            <person name="Nelson M.A."/>
            <person name="Werner-Washburne M."/>
            <person name="Selitrennikoff C.P."/>
            <person name="Kinsey J.A."/>
            <person name="Braun E.L."/>
            <person name="Zelter A."/>
            <person name="Schulte U."/>
            <person name="Kothe G.O."/>
            <person name="Jedd G."/>
            <person name="Mewes H.-W."/>
            <person name="Staben C."/>
            <person name="Marcotte E."/>
            <person name="Greenberg D."/>
            <person name="Roy A."/>
            <person name="Foley K."/>
            <person name="Naylor J."/>
            <person name="Stange-Thomann N."/>
            <person name="Barrett R."/>
            <person name="Gnerre S."/>
            <person name="Kamal M."/>
            <person name="Kamvysselis M."/>
            <person name="Mauceli E.W."/>
            <person name="Bielke C."/>
            <person name="Rudd S."/>
            <person name="Frishman D."/>
            <person name="Krystofova S."/>
            <person name="Rasmussen C."/>
            <person name="Metzenberg R.L."/>
            <person name="Perkins D.D."/>
            <person name="Kroken S."/>
            <person name="Cogoni C."/>
            <person name="Macino G."/>
            <person name="Catcheside D.E.A."/>
            <person name="Li W."/>
            <person name="Pratt R.J."/>
            <person name="Osmani S.A."/>
            <person name="DeSouza C.P.C."/>
            <person name="Glass N.L."/>
            <person name="Orbach M.J."/>
            <person name="Berglund J.A."/>
            <person name="Voelker R."/>
            <person name="Yarden O."/>
            <person name="Plamann M."/>
            <person name="Seiler S."/>
            <person name="Dunlap J.C."/>
            <person name="Radford A."/>
            <person name="Aramayo R."/>
            <person name="Natvig D.O."/>
            <person name="Alex L.A."/>
            <person name="Mannhaupt G."/>
            <person name="Ebbole D.J."/>
            <person name="Freitag M."/>
            <person name="Paulsen I."/>
            <person name="Sachs M.S."/>
            <person name="Lander E.S."/>
            <person name="Nusbaum C."/>
            <person name="Birren B.W."/>
        </authorList>
    </citation>
    <scope>NUCLEOTIDE SEQUENCE [LARGE SCALE GENOMIC DNA]</scope>
    <source>
        <strain>ATCC 24698 / 74-OR23-1A / CBS 708.71 / DSM 1257 / FGSC 987</strain>
    </source>
</reference>
<reference key="3">
    <citation type="journal article" date="1991" name="Genome">
        <title>Sequence and structure of mtr, an amino acid transport gene of Neurospora crassa.</title>
        <authorList>
            <person name="Koo K."/>
            <person name="Stuart W.D."/>
        </authorList>
    </citation>
    <scope>NUCLEOTIDE SEQUENCE [GENOMIC DNA] OF 210-470</scope>
</reference>
<feature type="chain" id="PRO_0000093819" description="N amino acid transport system protein">
    <location>
        <begin position="1"/>
        <end position="470"/>
    </location>
</feature>
<feature type="topological domain" description="Extracellular" evidence="1">
    <location>
        <begin position="1"/>
        <end position="56"/>
    </location>
</feature>
<feature type="transmembrane region" description="Helical" evidence="1">
    <location>
        <begin position="57"/>
        <end position="77"/>
    </location>
</feature>
<feature type="transmembrane region" description="Helical" evidence="1">
    <location>
        <begin position="78"/>
        <end position="98"/>
    </location>
</feature>
<feature type="topological domain" description="Extracellular" evidence="1">
    <location>
        <begin position="99"/>
        <end position="131"/>
    </location>
</feature>
<feature type="transmembrane region" description="Helical" evidence="1">
    <location>
        <begin position="132"/>
        <end position="152"/>
    </location>
</feature>
<feature type="topological domain" description="Cytoplasmic" evidence="1">
    <location>
        <begin position="153"/>
        <end position="168"/>
    </location>
</feature>
<feature type="transmembrane region" description="Helical" evidence="1">
    <location>
        <begin position="169"/>
        <end position="189"/>
    </location>
</feature>
<feature type="transmembrane region" description="Helical" evidence="1">
    <location>
        <begin position="191"/>
        <end position="211"/>
    </location>
</feature>
<feature type="topological domain" description="Cytoplasmic" evidence="1">
    <location>
        <begin position="212"/>
        <end position="236"/>
    </location>
</feature>
<feature type="transmembrane region" description="Helical" evidence="1">
    <location>
        <begin position="237"/>
        <end position="257"/>
    </location>
</feature>
<feature type="topological domain" description="Extracellular" evidence="1">
    <location>
        <begin position="258"/>
        <end position="275"/>
    </location>
</feature>
<feature type="transmembrane region" description="Helical" evidence="1">
    <location>
        <begin position="276"/>
        <end position="296"/>
    </location>
</feature>
<feature type="topological domain" description="Cytoplasmic" evidence="1">
    <location>
        <begin position="297"/>
        <end position="316"/>
    </location>
</feature>
<feature type="transmembrane region" description="Helical" evidence="1">
    <location>
        <begin position="317"/>
        <end position="337"/>
    </location>
</feature>
<feature type="topological domain" description="Extracellular" evidence="1">
    <location>
        <begin position="338"/>
        <end position="357"/>
    </location>
</feature>
<feature type="transmembrane region" description="Helical" evidence="1">
    <location>
        <begin position="358"/>
        <end position="378"/>
    </location>
</feature>
<feature type="topological domain" description="Cytoplasmic" evidence="1">
    <location>
        <begin position="379"/>
        <end position="386"/>
    </location>
</feature>
<feature type="transmembrane region" description="Helical" evidence="1">
    <location>
        <begin position="387"/>
        <end position="407"/>
    </location>
</feature>
<feature type="topological domain" description="Extracellular" evidence="1">
    <location>
        <begin position="408"/>
        <end position="427"/>
    </location>
</feature>
<feature type="transmembrane region" description="Helical" evidence="1">
    <location>
        <begin position="428"/>
        <end position="448"/>
    </location>
</feature>
<feature type="topological domain" description="Cytoplasmic" evidence="1">
    <location>
        <begin position="449"/>
        <end position="470"/>
    </location>
</feature>
<feature type="region of interest" description="Disordered" evidence="2">
    <location>
        <begin position="1"/>
        <end position="21"/>
    </location>
</feature>
<feature type="compositionally biased region" description="Basic and acidic residues" evidence="2">
    <location>
        <begin position="1"/>
        <end position="11"/>
    </location>
</feature>
<organism>
    <name type="scientific">Neurospora crassa (strain ATCC 24698 / 74-OR23-1A / CBS 708.71 / DSM 1257 / FGSC 987)</name>
    <dbReference type="NCBI Taxonomy" id="367110"/>
    <lineage>
        <taxon>Eukaryota</taxon>
        <taxon>Fungi</taxon>
        <taxon>Dikarya</taxon>
        <taxon>Ascomycota</taxon>
        <taxon>Pezizomycotina</taxon>
        <taxon>Sordariomycetes</taxon>
        <taxon>Sordariomycetidae</taxon>
        <taxon>Sordariales</taxon>
        <taxon>Sordariaceae</taxon>
        <taxon>Neurospora</taxon>
    </lineage>
</organism>
<protein>
    <recommendedName>
        <fullName>N amino acid transport system protein</fullName>
    </recommendedName>
    <alternativeName>
        <fullName>Methyltryptophan resistance protein</fullName>
    </alternativeName>
</protein>
<proteinExistence type="inferred from homology"/>
<evidence type="ECO:0000255" key="1"/>
<evidence type="ECO:0000256" key="2">
    <source>
        <dbReference type="SAM" id="MobiDB-lite"/>
    </source>
</evidence>
<evidence type="ECO:0000305" key="3"/>
<accession>P38680</accession>
<accession>Q7RVG6</accession>
<gene>
    <name type="primary">mtr</name>
    <name type="ORF">NCU06619</name>
</gene>
<keyword id="KW-0029">Amino-acid transport</keyword>
<keyword id="KW-0472">Membrane</keyword>
<keyword id="KW-1185">Reference proteome</keyword>
<keyword id="KW-0812">Transmembrane</keyword>
<keyword id="KW-1133">Transmembrane helix</keyword>
<keyword id="KW-0813">Transport</keyword>
<name>MTR_NEUCR</name>
<comment type="function">
    <text>Required for the transport of neutral aliphatic and aromatic amino acids via the N system.</text>
</comment>
<comment type="subcellular location">
    <subcellularLocation>
        <location>Membrane</location>
        <topology>Multi-pass membrane protein</topology>
    </subcellularLocation>
</comment>
<comment type="similarity">
    <text evidence="3">Belongs to the amino acid/polyamine transporter 2 family.</text>
</comment>